<reference key="1">
    <citation type="journal article" date="2006" name="Proc. Natl. Acad. Sci. U.S.A.">
        <title>Comparative genomics of the lactic acid bacteria.</title>
        <authorList>
            <person name="Makarova K.S."/>
            <person name="Slesarev A."/>
            <person name="Wolf Y.I."/>
            <person name="Sorokin A."/>
            <person name="Mirkin B."/>
            <person name="Koonin E.V."/>
            <person name="Pavlov A."/>
            <person name="Pavlova N."/>
            <person name="Karamychev V."/>
            <person name="Polouchine N."/>
            <person name="Shakhova V."/>
            <person name="Grigoriev I."/>
            <person name="Lou Y."/>
            <person name="Rohksar D."/>
            <person name="Lucas S."/>
            <person name="Huang K."/>
            <person name="Goodstein D.M."/>
            <person name="Hawkins T."/>
            <person name="Plengvidhya V."/>
            <person name="Welker D."/>
            <person name="Hughes J."/>
            <person name="Goh Y."/>
            <person name="Benson A."/>
            <person name="Baldwin K."/>
            <person name="Lee J.-H."/>
            <person name="Diaz-Muniz I."/>
            <person name="Dosti B."/>
            <person name="Smeianov V."/>
            <person name="Wechter W."/>
            <person name="Barabote R."/>
            <person name="Lorca G."/>
            <person name="Altermann E."/>
            <person name="Barrangou R."/>
            <person name="Ganesan B."/>
            <person name="Xie Y."/>
            <person name="Rawsthorne H."/>
            <person name="Tamir D."/>
            <person name="Parker C."/>
            <person name="Breidt F."/>
            <person name="Broadbent J.R."/>
            <person name="Hutkins R."/>
            <person name="O'Sullivan D."/>
            <person name="Steele J."/>
            <person name="Unlu G."/>
            <person name="Saier M.H. Jr."/>
            <person name="Klaenhammer T."/>
            <person name="Richardson P."/>
            <person name="Kozyavkin S."/>
            <person name="Weimer B.C."/>
            <person name="Mills D.A."/>
        </authorList>
    </citation>
    <scope>NUCLEOTIDE SEQUENCE [LARGE SCALE GENOMIC DNA]</scope>
    <source>
        <strain>ATCC 8293 / DSM 20343 / BCRC 11652 / CCM 1803 / JCM 6124 / NCDO 523 / NBRC 100496 / NCIMB 8023 / NCTC 12954 / NRRL B-1118 / 37Y</strain>
    </source>
</reference>
<organism>
    <name type="scientific">Leuconostoc mesenteroides subsp. mesenteroides (strain ATCC 8293 / DSM 20343 / BCRC 11652 / CCM 1803 / JCM 6124 / NCDO 523 / NBRC 100496 / NCIMB 8023 / NCTC 12954 / NRRL B-1118 / 37Y)</name>
    <dbReference type="NCBI Taxonomy" id="203120"/>
    <lineage>
        <taxon>Bacteria</taxon>
        <taxon>Bacillati</taxon>
        <taxon>Bacillota</taxon>
        <taxon>Bacilli</taxon>
        <taxon>Lactobacillales</taxon>
        <taxon>Lactobacillaceae</taxon>
        <taxon>Leuconostoc</taxon>
    </lineage>
</organism>
<proteinExistence type="inferred from homology"/>
<gene>
    <name evidence="1" type="primary">rpmH</name>
    <name type="ordered locus">LEUM_2065</name>
</gene>
<keyword id="KW-1185">Reference proteome</keyword>
<keyword id="KW-0687">Ribonucleoprotein</keyword>
<keyword id="KW-0689">Ribosomal protein</keyword>
<accession>Q03UI8</accession>
<feature type="chain" id="PRO_1000060760" description="Large ribosomal subunit protein bL34">
    <location>
        <begin position="1"/>
        <end position="44"/>
    </location>
</feature>
<feature type="region of interest" description="Disordered" evidence="2">
    <location>
        <begin position="1"/>
        <end position="44"/>
    </location>
</feature>
<feature type="compositionally biased region" description="Basic residues" evidence="2">
    <location>
        <begin position="1"/>
        <end position="22"/>
    </location>
</feature>
<feature type="compositionally biased region" description="Basic residues" evidence="2">
    <location>
        <begin position="30"/>
        <end position="44"/>
    </location>
</feature>
<name>RL34_LEUMM</name>
<dbReference type="EMBL" id="CP000414">
    <property type="protein sequence ID" value="ABJ63134.1"/>
    <property type="molecule type" value="Genomic_DNA"/>
</dbReference>
<dbReference type="RefSeq" id="WP_002816117.1">
    <property type="nucleotide sequence ID" value="NC_008531.1"/>
</dbReference>
<dbReference type="SMR" id="Q03UI8"/>
<dbReference type="EnsemblBacteria" id="ABJ63134">
    <property type="protein sequence ID" value="ABJ63134"/>
    <property type="gene ID" value="LEUM_2065"/>
</dbReference>
<dbReference type="GeneID" id="97505164"/>
<dbReference type="KEGG" id="lme:LEUM_2065"/>
<dbReference type="eggNOG" id="COG0230">
    <property type="taxonomic scope" value="Bacteria"/>
</dbReference>
<dbReference type="HOGENOM" id="CLU_129938_2_0_9"/>
<dbReference type="Proteomes" id="UP000000362">
    <property type="component" value="Chromosome"/>
</dbReference>
<dbReference type="GO" id="GO:1990904">
    <property type="term" value="C:ribonucleoprotein complex"/>
    <property type="evidence" value="ECO:0007669"/>
    <property type="project" value="UniProtKB-KW"/>
</dbReference>
<dbReference type="GO" id="GO:0005840">
    <property type="term" value="C:ribosome"/>
    <property type="evidence" value="ECO:0007669"/>
    <property type="project" value="UniProtKB-KW"/>
</dbReference>
<dbReference type="GO" id="GO:0003735">
    <property type="term" value="F:structural constituent of ribosome"/>
    <property type="evidence" value="ECO:0007669"/>
    <property type="project" value="InterPro"/>
</dbReference>
<dbReference type="GO" id="GO:0006412">
    <property type="term" value="P:translation"/>
    <property type="evidence" value="ECO:0007669"/>
    <property type="project" value="UniProtKB-UniRule"/>
</dbReference>
<dbReference type="FunFam" id="1.10.287.3980:FF:000001">
    <property type="entry name" value="Mitochondrial ribosomal protein L34"/>
    <property type="match status" value="1"/>
</dbReference>
<dbReference type="Gene3D" id="1.10.287.3980">
    <property type="match status" value="1"/>
</dbReference>
<dbReference type="HAMAP" id="MF_00391">
    <property type="entry name" value="Ribosomal_bL34"/>
    <property type="match status" value="1"/>
</dbReference>
<dbReference type="InterPro" id="IPR000271">
    <property type="entry name" value="Ribosomal_bL34"/>
</dbReference>
<dbReference type="InterPro" id="IPR020939">
    <property type="entry name" value="Ribosomal_bL34_CS"/>
</dbReference>
<dbReference type="NCBIfam" id="TIGR01030">
    <property type="entry name" value="rpmH_bact"/>
    <property type="match status" value="1"/>
</dbReference>
<dbReference type="PANTHER" id="PTHR14503:SF4">
    <property type="entry name" value="LARGE RIBOSOMAL SUBUNIT PROTEIN BL34M"/>
    <property type="match status" value="1"/>
</dbReference>
<dbReference type="PANTHER" id="PTHR14503">
    <property type="entry name" value="MITOCHONDRIAL RIBOSOMAL PROTEIN 34 FAMILY MEMBER"/>
    <property type="match status" value="1"/>
</dbReference>
<dbReference type="Pfam" id="PF00468">
    <property type="entry name" value="Ribosomal_L34"/>
    <property type="match status" value="1"/>
</dbReference>
<dbReference type="PROSITE" id="PS00784">
    <property type="entry name" value="RIBOSOMAL_L34"/>
    <property type="match status" value="1"/>
</dbReference>
<protein>
    <recommendedName>
        <fullName evidence="1">Large ribosomal subunit protein bL34</fullName>
    </recommendedName>
    <alternativeName>
        <fullName evidence="3">50S ribosomal protein L34</fullName>
    </alternativeName>
</protein>
<comment type="similarity">
    <text evidence="1">Belongs to the bacterial ribosomal protein bL34 family.</text>
</comment>
<sequence>MKRTYQPKKRHRERVHGFRKRMSTSNGRKVLARRRAKGRKVLSA</sequence>
<evidence type="ECO:0000255" key="1">
    <source>
        <dbReference type="HAMAP-Rule" id="MF_00391"/>
    </source>
</evidence>
<evidence type="ECO:0000256" key="2">
    <source>
        <dbReference type="SAM" id="MobiDB-lite"/>
    </source>
</evidence>
<evidence type="ECO:0000305" key="3"/>